<sequence length="58" mass="6782">MKQSEFRRWLESQGVDVANGSNHLKLRFHGRRSVMPRHPCDEIKEPLRKAILKQLGLS</sequence>
<protein>
    <recommendedName>
        <fullName>Probable mRNA interferase toxin HicA</fullName>
        <ecNumber>3.1.-.-</ecNumber>
    </recommendedName>
    <alternativeName>
        <fullName>Endoribonuclease HicA</fullName>
    </alternativeName>
    <alternativeName>
        <fullName>Toxin HicA</fullName>
    </alternativeName>
</protein>
<feature type="chain" id="PRO_0000259908" description="Probable mRNA interferase toxin HicA">
    <location>
        <begin position="1"/>
        <end position="58"/>
    </location>
</feature>
<feature type="helix" evidence="4">
    <location>
        <begin position="3"/>
        <end position="12"/>
    </location>
</feature>
<feature type="strand" evidence="4">
    <location>
        <begin position="16"/>
        <end position="18"/>
    </location>
</feature>
<feature type="strand" evidence="4">
    <location>
        <begin position="21"/>
        <end position="28"/>
    </location>
</feature>
<feature type="strand" evidence="4">
    <location>
        <begin position="31"/>
        <end position="35"/>
    </location>
</feature>
<feature type="helix" evidence="4">
    <location>
        <begin position="45"/>
        <end position="54"/>
    </location>
</feature>
<evidence type="ECO:0000250" key="1"/>
<evidence type="ECO:0000269" key="2">
    <source>
    </source>
</evidence>
<evidence type="ECO:0000305" key="3"/>
<evidence type="ECO:0007829" key="4">
    <source>
        <dbReference type="PDB" id="6HPB"/>
    </source>
</evidence>
<reference key="1">
    <citation type="journal article" date="1997" name="Science">
        <title>The complete genome sequence of Escherichia coli K-12.</title>
        <authorList>
            <person name="Blattner F.R."/>
            <person name="Plunkett G. III"/>
            <person name="Bloch C.A."/>
            <person name="Perna N.T."/>
            <person name="Burland V."/>
            <person name="Riley M."/>
            <person name="Collado-Vides J."/>
            <person name="Glasner J.D."/>
            <person name="Rode C.K."/>
            <person name="Mayhew G.F."/>
            <person name="Gregor J."/>
            <person name="Davis N.W."/>
            <person name="Kirkpatrick H.A."/>
            <person name="Goeden M.A."/>
            <person name="Rose D.J."/>
            <person name="Mau B."/>
            <person name="Shao Y."/>
        </authorList>
    </citation>
    <scope>NUCLEOTIDE SEQUENCE [LARGE SCALE GENOMIC DNA]</scope>
    <source>
        <strain>K12 / MG1655 / ATCC 47076</strain>
    </source>
</reference>
<reference key="2">
    <citation type="journal article" date="2006" name="Mol. Syst. Biol.">
        <title>Highly accurate genome sequences of Escherichia coli K-12 strains MG1655 and W3110.</title>
        <authorList>
            <person name="Hayashi K."/>
            <person name="Morooka N."/>
            <person name="Yamamoto Y."/>
            <person name="Fujita K."/>
            <person name="Isono K."/>
            <person name="Choi S."/>
            <person name="Ohtsubo E."/>
            <person name="Baba T."/>
            <person name="Wanner B.L."/>
            <person name="Mori H."/>
            <person name="Horiuchi T."/>
        </authorList>
    </citation>
    <scope>NUCLEOTIDE SEQUENCE [LARGE SCALE GENOMIC DNA]</scope>
    <source>
        <strain>K12 / W3110 / ATCC 27325 / DSM 5911</strain>
    </source>
</reference>
<reference key="3">
    <citation type="journal article" date="2006" name="Bioinformatics">
        <title>The HicAB cassette, a putative novel, RNA-targeting toxin-antitoxin system in archaea and bacteria.</title>
        <authorList>
            <person name="Makarova K.S."/>
            <person name="Grishin N.V."/>
            <person name="Koonin E.V."/>
        </authorList>
    </citation>
    <scope>PREDICTION OF FUNCTION</scope>
</reference>
<reference key="4">
    <citation type="journal article" date="2009" name="J. Bacteriol.">
        <title>HicA of Escherichia coli defines a novel family of translation-independent mRNA interferases in bacteria and archaea.</title>
        <authorList>
            <person name="Jorgensen M.G."/>
            <person name="Pandey D.P."/>
            <person name="Jaskolska M."/>
            <person name="Gerdes K."/>
        </authorList>
    </citation>
    <scope>FUNCTION AS AN MRNA INTERFERASE</scope>
    <scope>INDUCTION</scope>
    <scope>OPERON STRUCTURE</scope>
    <source>
        <strain>K12 / MG1655 / ATCC 47076</strain>
    </source>
</reference>
<reference key="5">
    <citation type="journal article" date="2011" name="Proc. Natl. Acad. Sci. U.S.A.">
        <title>Bacterial persistence by RNA endonucleases.</title>
        <authorList>
            <person name="Maisonneuve E."/>
            <person name="Shakespeare L.J."/>
            <person name="Joergensen M.G."/>
            <person name="Gerdes K."/>
        </authorList>
    </citation>
    <scope>RETRACTED PAPER</scope>
    <source>
        <strain>K12 / MG1655 / ATCC 47076</strain>
    </source>
</reference>
<reference key="6">
    <citation type="journal article" date="2018" name="Proc. Natl. Acad. Sci. U.S.A.">
        <authorList>
            <person name="Maisonneuve E."/>
            <person name="Shakespeare L.J."/>
            <person name="Joergensen M.G."/>
            <person name="Gerdes K."/>
        </authorList>
    </citation>
    <scope>RETRACTION NOTICE OF PUBMED:21788497</scope>
</reference>
<keyword id="KW-0002">3D-structure</keyword>
<keyword id="KW-0255">Endonuclease</keyword>
<keyword id="KW-0378">Hydrolase</keyword>
<keyword id="KW-0540">Nuclease</keyword>
<keyword id="KW-1185">Reference proteome</keyword>
<keyword id="KW-0694">RNA-binding</keyword>
<keyword id="KW-0346">Stress response</keyword>
<keyword id="KW-1277">Toxin-antitoxin system</keyword>
<gene>
    <name type="primary">hicA</name>
    <name type="synonym">yncN</name>
    <name type="ordered locus">b4532</name>
    <name type="ordered locus">JW5230</name>
</gene>
<name>HICA_ECOLI</name>
<proteinExistence type="evidence at protein level"/>
<organism>
    <name type="scientific">Escherichia coli (strain K12)</name>
    <dbReference type="NCBI Taxonomy" id="83333"/>
    <lineage>
        <taxon>Bacteria</taxon>
        <taxon>Pseudomonadati</taxon>
        <taxon>Pseudomonadota</taxon>
        <taxon>Gammaproteobacteria</taxon>
        <taxon>Enterobacterales</taxon>
        <taxon>Enterobacteriaceae</taxon>
        <taxon>Escherichia</taxon>
    </lineage>
</organism>
<accession>P76106</accession>
<accession>Q2MBB8</accession>
<comment type="function">
    <text evidence="2">Toxic component of a type II toxin-antitoxin (TA) system. A probable translation-independent mRNA interferase. Overexpression causes cessation of cell growth and inhibits cell proliferation via inhibition of translation; this blockage is overcome (after 90 minutes) by subsequent expression of antitoxin HicB. Overexpression causes cleavage of a number of mRNAs and tmRNA, in a translation-independent fashion, suggesting this is an mRNA interferase (PubMed:19060138).</text>
</comment>
<comment type="subunit">
    <text evidence="1">Probably forms a complex with the antitoxin HicB which inhibits the mRNA interferase activity.</text>
</comment>
<comment type="induction">
    <text evidence="2">Induced by amino acid starvation, carbon starvation and when translation is blocked. Induction no longer occurs in the absence of Lon protease suggesting, by homology to other toxin-antitoxin systems, that it may degrade the HicB antitoxin. A member of the hicA-hicB operon.</text>
</comment>
<comment type="similarity">
    <text evidence="3">Belongs to the HicA mRNA interferase family.</text>
</comment>
<dbReference type="EC" id="3.1.-.-"/>
<dbReference type="EMBL" id="U00096">
    <property type="protein sequence ID" value="AAC74519.2"/>
    <property type="molecule type" value="Genomic_DNA"/>
</dbReference>
<dbReference type="EMBL" id="AP009048">
    <property type="protein sequence ID" value="BAE76438.1"/>
    <property type="molecule type" value="Genomic_DNA"/>
</dbReference>
<dbReference type="PIR" id="H64895">
    <property type="entry name" value="H64895"/>
</dbReference>
<dbReference type="RefSeq" id="NP_415954.2">
    <property type="nucleotide sequence ID" value="NC_000913.3"/>
</dbReference>
<dbReference type="RefSeq" id="WP_000813794.1">
    <property type="nucleotide sequence ID" value="NZ_LN832404.1"/>
</dbReference>
<dbReference type="PDB" id="6HPB">
    <property type="method" value="X-ray"/>
    <property type="resolution" value="2.28 A"/>
    <property type="chains" value="A/C=1-58"/>
</dbReference>
<dbReference type="PDBsum" id="6HPB"/>
<dbReference type="SMR" id="P76106"/>
<dbReference type="BioGRID" id="4259495">
    <property type="interactions" value="185"/>
</dbReference>
<dbReference type="BioGRID" id="850351">
    <property type="interactions" value="2"/>
</dbReference>
<dbReference type="ComplexPortal" id="CPX-4119">
    <property type="entry name" value="HicAB toxin-antitoxin complex"/>
</dbReference>
<dbReference type="FunCoup" id="P76106">
    <property type="interactions" value="30"/>
</dbReference>
<dbReference type="IntAct" id="P76106">
    <property type="interactions" value="2"/>
</dbReference>
<dbReference type="STRING" id="511145.b4532"/>
<dbReference type="PaxDb" id="511145-b4532"/>
<dbReference type="EnsemblBacteria" id="AAC74519">
    <property type="protein sequence ID" value="AAC74519"/>
    <property type="gene ID" value="b4532"/>
</dbReference>
<dbReference type="GeneID" id="75202358"/>
<dbReference type="GeneID" id="945989"/>
<dbReference type="KEGG" id="ecj:JW5230"/>
<dbReference type="KEGG" id="eco:b4532"/>
<dbReference type="KEGG" id="ecoc:C3026_08365"/>
<dbReference type="PATRIC" id="fig|1411691.4.peg.831"/>
<dbReference type="eggNOG" id="COG1724">
    <property type="taxonomic scope" value="Bacteria"/>
</dbReference>
<dbReference type="HOGENOM" id="CLU_164851_5_0_6"/>
<dbReference type="InParanoid" id="P76106"/>
<dbReference type="OMA" id="HGAKEMG"/>
<dbReference type="OrthoDB" id="6699594at2"/>
<dbReference type="BioCyc" id="EcoCyc:MONOMER0-2673"/>
<dbReference type="PRO" id="PR:P76106"/>
<dbReference type="Proteomes" id="UP000000625">
    <property type="component" value="Chromosome"/>
</dbReference>
<dbReference type="GO" id="GO:0110001">
    <property type="term" value="C:toxin-antitoxin complex"/>
    <property type="evidence" value="ECO:0000353"/>
    <property type="project" value="ComplexPortal"/>
</dbReference>
<dbReference type="GO" id="GO:0003729">
    <property type="term" value="F:mRNA binding"/>
    <property type="evidence" value="ECO:0007669"/>
    <property type="project" value="InterPro"/>
</dbReference>
<dbReference type="GO" id="GO:0004521">
    <property type="term" value="F:RNA endonuclease activity"/>
    <property type="evidence" value="ECO:0000315"/>
    <property type="project" value="EcoCyc"/>
</dbReference>
<dbReference type="GO" id="GO:0006402">
    <property type="term" value="P:mRNA catabolic process"/>
    <property type="evidence" value="ECO:0000315"/>
    <property type="project" value="EcoCyc"/>
</dbReference>
<dbReference type="GO" id="GO:0006355">
    <property type="term" value="P:regulation of DNA-templated transcription"/>
    <property type="evidence" value="ECO:0000314"/>
    <property type="project" value="ComplexPortal"/>
</dbReference>
<dbReference type="GO" id="GO:0040008">
    <property type="term" value="P:regulation of growth"/>
    <property type="evidence" value="ECO:0000303"/>
    <property type="project" value="ComplexPortal"/>
</dbReference>
<dbReference type="FunFam" id="3.30.920.30:FF:000001">
    <property type="entry name" value="Probable mRNA interferase HicA"/>
    <property type="match status" value="1"/>
</dbReference>
<dbReference type="Gene3D" id="3.30.920.30">
    <property type="entry name" value="Hypothetical protein"/>
    <property type="match status" value="1"/>
</dbReference>
<dbReference type="InterPro" id="IPR012933">
    <property type="entry name" value="HicA_mRNA_interferase"/>
</dbReference>
<dbReference type="InterPro" id="IPR038570">
    <property type="entry name" value="HicA_sf"/>
</dbReference>
<dbReference type="Pfam" id="PF07927">
    <property type="entry name" value="HicA_toxin"/>
    <property type="match status" value="1"/>
</dbReference>
<dbReference type="SUPFAM" id="SSF54786">
    <property type="entry name" value="YcfA/nrd intein domain"/>
    <property type="match status" value="1"/>
</dbReference>